<organism>
    <name type="scientific">Cryptococcus neoformans var. neoformans serotype D (strain B-3501A)</name>
    <name type="common">Filobasidiella neoformans</name>
    <dbReference type="NCBI Taxonomy" id="283643"/>
    <lineage>
        <taxon>Eukaryota</taxon>
        <taxon>Fungi</taxon>
        <taxon>Dikarya</taxon>
        <taxon>Basidiomycota</taxon>
        <taxon>Agaricomycotina</taxon>
        <taxon>Tremellomycetes</taxon>
        <taxon>Tremellales</taxon>
        <taxon>Cryptococcaceae</taxon>
        <taxon>Cryptococcus</taxon>
        <taxon>Cryptococcus neoformans species complex</taxon>
    </lineage>
</organism>
<gene>
    <name type="primary">CWC27</name>
    <name type="ordered locus">CNBJ1160</name>
</gene>
<comment type="function">
    <text evidence="1">PPIases accelerate the folding of proteins. It catalyzes the cis-trans isomerization of proline imidic peptide bonds in oligopeptides. Involved in pre-mRNA splicing (By similarity).</text>
</comment>
<comment type="catalytic activity">
    <reaction>
        <text>[protein]-peptidylproline (omega=180) = [protein]-peptidylproline (omega=0)</text>
        <dbReference type="Rhea" id="RHEA:16237"/>
        <dbReference type="Rhea" id="RHEA-COMP:10747"/>
        <dbReference type="Rhea" id="RHEA-COMP:10748"/>
        <dbReference type="ChEBI" id="CHEBI:83833"/>
        <dbReference type="ChEBI" id="CHEBI:83834"/>
        <dbReference type="EC" id="5.2.1.8"/>
    </reaction>
</comment>
<comment type="subunit">
    <text evidence="1">Associated with the spliceosome.</text>
</comment>
<comment type="subcellular location">
    <subcellularLocation>
        <location evidence="1">Cytoplasm</location>
    </subcellularLocation>
    <subcellularLocation>
        <location evidence="1">Nucleus</location>
    </subcellularLocation>
</comment>
<comment type="similarity">
    <text evidence="5">Belongs to the cyclophilin-type PPIase family. CWC27 subfamily.</text>
</comment>
<evidence type="ECO:0000250" key="1"/>
<evidence type="ECO:0000255" key="2"/>
<evidence type="ECO:0000255" key="3">
    <source>
        <dbReference type="PROSITE-ProRule" id="PRU00156"/>
    </source>
</evidence>
<evidence type="ECO:0000256" key="4">
    <source>
        <dbReference type="SAM" id="MobiDB-lite"/>
    </source>
</evidence>
<evidence type="ECO:0000305" key="5"/>
<proteinExistence type="inferred from homology"/>
<sequence length="491" mass="55194">MSNLYATEPATNGKVIIDTTAGEIEVELWGKECPKAVRNFLALTMEGYYDGVIFHRVVPGFIIQSGDPTGTGMGGESFYGEPFEDEIHGRLKFNRRGLLGMANNGSRNSNTSQFFITLDAAPELTNKHTMFGKIVGNTIFNVLNIGNLDTDKEERPLIPPKIRRIHIIENPFDDIVPRITAEEKKAQQKAKLEAKKDMEQRERRAKAKKNTGLLSFGDSEEIPEEEVTVKKKSMTRQDLVDPSEAEHTKSKTSKMTETFVNIPPSLKDLGKSRENEASEEKKAVDLKNIRAQHEREKAGGSAARQAEIKRMEEDLRRLKKRSGSVSDSESDSSSRARRKGPSYLEQELAKYASKRGRAAMKAGNKRGRRDEEEDVLTEMRKFSKRVMQAGDEPEEEQAEEIEEGEAKEEGTGIGAAMAEEEGGIEVDDDVGWLTHKLKFQVDDKELTRRAEDEYAVIDPRAKARDLLGKPDKKKLKGNPNRRTVRNSGRNR</sequence>
<reference key="1">
    <citation type="journal article" date="2005" name="Science">
        <title>The genome of the basidiomycetous yeast and human pathogen Cryptococcus neoformans.</title>
        <authorList>
            <person name="Loftus B.J."/>
            <person name="Fung E."/>
            <person name="Roncaglia P."/>
            <person name="Rowley D."/>
            <person name="Amedeo P."/>
            <person name="Bruno D."/>
            <person name="Vamathevan J."/>
            <person name="Miranda M."/>
            <person name="Anderson I.J."/>
            <person name="Fraser J.A."/>
            <person name="Allen J.E."/>
            <person name="Bosdet I.E."/>
            <person name="Brent M.R."/>
            <person name="Chiu R."/>
            <person name="Doering T.L."/>
            <person name="Donlin M.J."/>
            <person name="D'Souza C.A."/>
            <person name="Fox D.S."/>
            <person name="Grinberg V."/>
            <person name="Fu J."/>
            <person name="Fukushima M."/>
            <person name="Haas B.J."/>
            <person name="Huang J.C."/>
            <person name="Janbon G."/>
            <person name="Jones S.J.M."/>
            <person name="Koo H.L."/>
            <person name="Krzywinski M.I."/>
            <person name="Kwon-Chung K.J."/>
            <person name="Lengeler K.B."/>
            <person name="Maiti R."/>
            <person name="Marra M.A."/>
            <person name="Marra R.E."/>
            <person name="Mathewson C.A."/>
            <person name="Mitchell T.G."/>
            <person name="Pertea M."/>
            <person name="Riggs F.R."/>
            <person name="Salzberg S.L."/>
            <person name="Schein J.E."/>
            <person name="Shvartsbeyn A."/>
            <person name="Shin H."/>
            <person name="Shumway M."/>
            <person name="Specht C.A."/>
            <person name="Suh B.B."/>
            <person name="Tenney A."/>
            <person name="Utterback T.R."/>
            <person name="Wickes B.L."/>
            <person name="Wortman J.R."/>
            <person name="Wye N.H."/>
            <person name="Kronstad J.W."/>
            <person name="Lodge J.K."/>
            <person name="Heitman J."/>
            <person name="Davis R.W."/>
            <person name="Fraser C.M."/>
            <person name="Hyman R.W."/>
        </authorList>
    </citation>
    <scope>NUCLEOTIDE SEQUENCE [LARGE SCALE GENOMIC DNA]</scope>
    <source>
        <strain>B-3501A</strain>
    </source>
</reference>
<name>CWC27_CRYNB</name>
<dbReference type="EC" id="5.2.1.8"/>
<dbReference type="EMBL" id="AAEY01000049">
    <property type="protein sequence ID" value="EAL18474.1"/>
    <property type="molecule type" value="Genomic_DNA"/>
</dbReference>
<dbReference type="RefSeq" id="XP_773121.1">
    <property type="nucleotide sequence ID" value="XM_768028.1"/>
</dbReference>
<dbReference type="SMR" id="P0CP93"/>
<dbReference type="EnsemblFungi" id="AAW45928">
    <property type="protein sequence ID" value="AAW45928"/>
    <property type="gene ID" value="CNJ02320"/>
</dbReference>
<dbReference type="GeneID" id="4938456"/>
<dbReference type="KEGG" id="cnb:CNBJ1160"/>
<dbReference type="VEuPathDB" id="FungiDB:CNBJ1160"/>
<dbReference type="HOGENOM" id="CLU_012062_14_4_1"/>
<dbReference type="OrthoDB" id="7640at5206"/>
<dbReference type="GO" id="GO:0071013">
    <property type="term" value="C:catalytic step 2 spliceosome"/>
    <property type="evidence" value="ECO:0007669"/>
    <property type="project" value="TreeGrafter"/>
</dbReference>
<dbReference type="GO" id="GO:0005737">
    <property type="term" value="C:cytoplasm"/>
    <property type="evidence" value="ECO:0007669"/>
    <property type="project" value="UniProtKB-SubCell"/>
</dbReference>
<dbReference type="GO" id="GO:0003755">
    <property type="term" value="F:peptidyl-prolyl cis-trans isomerase activity"/>
    <property type="evidence" value="ECO:0007669"/>
    <property type="project" value="UniProtKB-KW"/>
</dbReference>
<dbReference type="GO" id="GO:0006397">
    <property type="term" value="P:mRNA processing"/>
    <property type="evidence" value="ECO:0007669"/>
    <property type="project" value="UniProtKB-KW"/>
</dbReference>
<dbReference type="GO" id="GO:0008380">
    <property type="term" value="P:RNA splicing"/>
    <property type="evidence" value="ECO:0007669"/>
    <property type="project" value="UniProtKB-KW"/>
</dbReference>
<dbReference type="CDD" id="cd01925">
    <property type="entry name" value="cyclophilin_CeCYP16-like"/>
    <property type="match status" value="1"/>
</dbReference>
<dbReference type="FunFam" id="2.40.100.10:FF:000007">
    <property type="entry name" value="Peptidyl-prolyl cis-trans isomerase CWC27 homolog"/>
    <property type="match status" value="1"/>
</dbReference>
<dbReference type="Gene3D" id="2.40.100.10">
    <property type="entry name" value="Cyclophilin-like"/>
    <property type="match status" value="1"/>
</dbReference>
<dbReference type="InterPro" id="IPR029000">
    <property type="entry name" value="Cyclophilin-like_dom_sf"/>
</dbReference>
<dbReference type="InterPro" id="IPR002130">
    <property type="entry name" value="Cyclophilin-type_PPIase_dom"/>
</dbReference>
<dbReference type="InterPro" id="IPR044666">
    <property type="entry name" value="Cyclophilin_A-like"/>
</dbReference>
<dbReference type="PANTHER" id="PTHR45625">
    <property type="entry name" value="PEPTIDYL-PROLYL CIS-TRANS ISOMERASE-RELATED"/>
    <property type="match status" value="1"/>
</dbReference>
<dbReference type="PANTHER" id="PTHR45625:SF6">
    <property type="entry name" value="SPLICEOSOME-ASSOCIATED PROTEIN CWC27 HOMOLOG"/>
    <property type="match status" value="1"/>
</dbReference>
<dbReference type="Pfam" id="PF00160">
    <property type="entry name" value="Pro_isomerase"/>
    <property type="match status" value="1"/>
</dbReference>
<dbReference type="PRINTS" id="PR00153">
    <property type="entry name" value="CSAPPISMRASE"/>
</dbReference>
<dbReference type="SUPFAM" id="SSF50891">
    <property type="entry name" value="Cyclophilin-like"/>
    <property type="match status" value="1"/>
</dbReference>
<dbReference type="PROSITE" id="PS50072">
    <property type="entry name" value="CSA_PPIASE_2"/>
    <property type="match status" value="1"/>
</dbReference>
<feature type="chain" id="PRO_0000410206" description="Peptidyl-prolyl isomerase CWC27">
    <location>
        <begin position="1"/>
        <end position="491"/>
    </location>
</feature>
<feature type="domain" description="PPIase cyclophilin-type" evidence="3">
    <location>
        <begin position="11"/>
        <end position="167"/>
    </location>
</feature>
<feature type="region of interest" description="Disordered" evidence="4">
    <location>
        <begin position="186"/>
        <end position="427"/>
    </location>
</feature>
<feature type="region of interest" description="Disordered" evidence="4">
    <location>
        <begin position="464"/>
        <end position="491"/>
    </location>
</feature>
<feature type="coiled-coil region" evidence="2">
    <location>
        <begin position="277"/>
        <end position="327"/>
    </location>
</feature>
<feature type="compositionally biased region" description="Basic and acidic residues" evidence="4">
    <location>
        <begin position="186"/>
        <end position="202"/>
    </location>
</feature>
<feature type="compositionally biased region" description="Basic and acidic residues" evidence="4">
    <location>
        <begin position="268"/>
        <end position="298"/>
    </location>
</feature>
<feature type="compositionally biased region" description="Basic and acidic residues" evidence="4">
    <location>
        <begin position="306"/>
        <end position="316"/>
    </location>
</feature>
<feature type="compositionally biased region" description="Low complexity" evidence="4">
    <location>
        <begin position="323"/>
        <end position="333"/>
    </location>
</feature>
<feature type="compositionally biased region" description="Basic residues" evidence="4">
    <location>
        <begin position="352"/>
        <end position="367"/>
    </location>
</feature>
<feature type="compositionally biased region" description="Acidic residues" evidence="4">
    <location>
        <begin position="391"/>
        <end position="406"/>
    </location>
</feature>
<feature type="compositionally biased region" description="Acidic residues" evidence="4">
    <location>
        <begin position="418"/>
        <end position="427"/>
    </location>
</feature>
<feature type="compositionally biased region" description="Basic residues" evidence="4">
    <location>
        <begin position="482"/>
        <end position="491"/>
    </location>
</feature>
<accession>P0CP93</accession>
<accession>Q55L68</accession>
<accession>Q5KAB3</accession>
<protein>
    <recommendedName>
        <fullName>Peptidyl-prolyl isomerase CWC27</fullName>
        <shortName>PPIase CWC27</shortName>
        <ecNumber>5.2.1.8</ecNumber>
    </recommendedName>
    <alternativeName>
        <fullName>Rotamase CWC27</fullName>
    </alternativeName>
</protein>
<keyword id="KW-0175">Coiled coil</keyword>
<keyword id="KW-0963">Cytoplasm</keyword>
<keyword id="KW-0413">Isomerase</keyword>
<keyword id="KW-0507">mRNA processing</keyword>
<keyword id="KW-0508">mRNA splicing</keyword>
<keyword id="KW-0539">Nucleus</keyword>
<keyword id="KW-0697">Rotamase</keyword>
<keyword id="KW-0747">Spliceosome</keyword>